<name>NT2_LEIDO</name>
<sequence>MTGQSAAVEGSNSALPWYRMGFHTLAEFNTYVTFVLLGMSIMMVTSAVTSAPDFVTKYFIYATGDPDAVAETPLFWNNANTFYNAGTYAMQVVTEIASLTPFMRSIPLGIRLFLGLGIPFVELVVIIAVPAATIPTQNGAIAVIMVVAMMGGLSKALCDSCTNALVGPFPTKFMNGAQWGLTVIALFMSIIQIILQVSMGSTFQDVLTISRIYFGIGIGIQVMAIAALVLLRYNPFAQKYIAEFRAAALRRRGHVEPEESQDSKEPATGDVAEAPKAGEKEVTLDAMEEADEVRAVPSDAFVAKSGAVLQATGDADRMVDLDQTKNITSTEQMLRASVWSVFKRIYPMLLCAFTIFFTTLLVFPGVFFLVPARSGWYMTIIVTLFNAGDFVARVLLMIRVLRPSPKLVIVGTFGRLAVIPLIVLCVRGFIPGVALPYVLIFLFGLTNGYFGTMSCIHCPRTPTLHYAGERSVAAMLAGISLMLGLCFGSNMSLAITLTY</sequence>
<keyword id="KW-1003">Cell membrane</keyword>
<keyword id="KW-0966">Cell projection</keyword>
<keyword id="KW-0969">Cilium</keyword>
<keyword id="KW-0282">Flagellum</keyword>
<keyword id="KW-0325">Glycoprotein</keyword>
<keyword id="KW-0472">Membrane</keyword>
<keyword id="KW-0812">Transmembrane</keyword>
<keyword id="KW-1133">Transmembrane helix</keyword>
<keyword id="KW-0813">Transport</keyword>
<accession>Q9NBV4</accession>
<feature type="chain" id="PRO_0000462032" description="Nucleoside transporter 2">
    <location>
        <begin position="1"/>
        <end position="499" status="greater than"/>
    </location>
</feature>
<feature type="topological domain" description="Cytoplasmic" evidence="5">
    <location>
        <begin position="1"/>
        <end position="30"/>
    </location>
</feature>
<feature type="transmembrane region" description="Helical" evidence="1">
    <location>
        <begin position="31"/>
        <end position="51"/>
    </location>
</feature>
<feature type="transmembrane region" description="Helical" evidence="1">
    <location>
        <begin position="112"/>
        <end position="132"/>
    </location>
</feature>
<feature type="transmembrane region" description="Helical" evidence="1">
    <location>
        <begin position="133"/>
        <end position="153"/>
    </location>
</feature>
<feature type="transmembrane region" description="Helical" evidence="1">
    <location>
        <begin position="179"/>
        <end position="199"/>
    </location>
</feature>
<feature type="transmembrane region" description="Helical" evidence="1">
    <location>
        <begin position="212"/>
        <end position="232"/>
    </location>
</feature>
<feature type="transmembrane region" description="Helical" evidence="1">
    <location>
        <begin position="350"/>
        <end position="370"/>
    </location>
</feature>
<feature type="transmembrane region" description="Helical" evidence="1">
    <location>
        <begin position="378"/>
        <end position="398"/>
    </location>
</feature>
<feature type="transmembrane region" description="Helical" evidence="1">
    <location>
        <begin position="406"/>
        <end position="426"/>
    </location>
</feature>
<feature type="transmembrane region" description="Helical" evidence="1">
    <location>
        <begin position="428"/>
        <end position="448"/>
    </location>
</feature>
<feature type="transmembrane region" description="Helical" evidence="1">
    <location>
        <begin position="475"/>
        <end position="495"/>
    </location>
</feature>
<feature type="region of interest" description="Disordered" evidence="3">
    <location>
        <begin position="255"/>
        <end position="276"/>
    </location>
</feature>
<feature type="compositionally biased region" description="Basic and acidic residues" evidence="3">
    <location>
        <begin position="255"/>
        <end position="267"/>
    </location>
</feature>
<feature type="glycosylation site" description="N-linked (GlcNAc...) asparagine" evidence="2">
    <location>
        <position position="326"/>
    </location>
</feature>
<feature type="mutagenesis site" description="Does not revert the effects of deactivating mutation N-389 on inosine and guanosine transport." evidence="7">
    <original>N</original>
    <variation>G</variation>
    <variation>A</variation>
    <variation>S</variation>
    <variation>T</variation>
    <variation>E</variation>
    <variation>D</variation>
    <variation>K</variation>
    <variation>F</variation>
    <location>
        <position position="175"/>
    </location>
</feature>
<feature type="mutagenesis site" description="No significant effects on inosine and guanosine transport. No significant effects on protein localization to cell membrane. Reverts the effects of deactivating mutation N-389 on inosine and guanosine transport. No significant effect on inosine and guanosine transport; when associated with N-389." evidence="7">
    <original>N</original>
    <variation>I</variation>
    <location>
        <position position="175"/>
    </location>
</feature>
<feature type="mutagenesis site" description="Reverts the effects of deactivating mutation N-389 on inosine and guanosine transport." evidence="7">
    <original>N</original>
    <variation>V</variation>
    <variation>L</variation>
    <variation>I</variation>
    <location>
        <position position="175"/>
    </location>
</feature>
<feature type="mutagenesis site" description="No significant effect on inosine and guanosine transport. Slightly reduces affinity for inosine and guanosine. No significant effects on sensitivity to formycin B. No significant effects on protein localization to cell membrane." evidence="8">
    <original>S</original>
    <variation>A</variation>
    <location>
        <position position="189"/>
    </location>
</feature>
<feature type="mutagenesis site" description="Abolishes transport of inosine and guanosine. Reduces sensitivity to formycin B. No significant effects on protein localization to cell membrane." evidence="8">
    <original>S</original>
    <variation>L</variation>
    <location>
        <position position="189"/>
    </location>
</feature>
<feature type="mutagenesis site" description="Reduces transport of inosine and guanosine. Reduces affinity for inosine and guanosine. No significant effects on sensitivity to formycin B. No significant effects on protein localization to cell membrane." evidence="8">
    <original>S</original>
    <variation>T</variation>
    <location>
        <position position="189"/>
    </location>
</feature>
<feature type="mutagenesis site" description="Abolishes transport of inosine and guanosine. Reduces sensitivity to formycin B. Affects protein localization to cell membrane." evidence="8">
    <location>
        <begin position="376"/>
        <end position="499"/>
    </location>
</feature>
<feature type="mutagenesis site" description="Reduces transport of inosine and guanosine. Moderately reduces sensitivity to formycin B. No significant effects on protein localization to cell membrane." evidence="5">
    <original>D</original>
    <variation>E</variation>
    <location>
        <position position="389"/>
    </location>
</feature>
<feature type="mutagenesis site" description="Abolishes transport of inosine and guanosine. Significantly reduces sensitivity to formycin B. No significant effects on protein localization to cell membrane. No significant effect on inosine and guanosine transport; when associated with I-175." evidence="5 7">
    <original>D</original>
    <variation>N</variation>
    <location>
        <position position="389"/>
    </location>
</feature>
<feature type="mutagenesis site" description="Slightly reduces inosine and guanosine transport. Moderately reduces sensitivity to formycin B. No significant effects on protein localization to cell membrane." evidence="5">
    <original>R</original>
    <variation>K</variation>
    <location>
        <position position="393"/>
    </location>
</feature>
<feature type="mutagenesis site" description="Reduces transport of inosine and guanosine. Moderately reduces sensitivity to formycin B. Causes relocalization of the protein from cell membrane to flagellar membrane." evidence="5">
    <original>R</original>
    <variation>L</variation>
    <location>
        <position position="393"/>
    </location>
</feature>
<feature type="non-terminal residue" evidence="14">
    <location>
        <position position="499"/>
    </location>
</feature>
<proteinExistence type="evidence at protein level"/>
<gene>
    <name evidence="14" type="primary">NT2</name>
</gene>
<dbReference type="EMBL" id="AF245276">
    <property type="protein sequence ID" value="AAF74264.1"/>
    <property type="molecule type" value="Genomic_DNA"/>
</dbReference>
<dbReference type="SMR" id="Q9NBV4"/>
<dbReference type="TCDB" id="2.A.57.2.3">
    <property type="family name" value="the equilibrative nucleoside transporter (ent) family"/>
</dbReference>
<dbReference type="VEuPathDB" id="TriTrypDB:LdBPK_362040.1"/>
<dbReference type="VEuPathDB" id="TriTrypDB:LdCL_360025900"/>
<dbReference type="VEuPathDB" id="TriTrypDB:LDHU3_36.2660"/>
<dbReference type="GO" id="GO:0031514">
    <property type="term" value="C:motile cilium"/>
    <property type="evidence" value="ECO:0007669"/>
    <property type="project" value="UniProtKB-SubCell"/>
</dbReference>
<dbReference type="GO" id="GO:0005886">
    <property type="term" value="C:plasma membrane"/>
    <property type="evidence" value="ECO:0007669"/>
    <property type="project" value="UniProtKB-SubCell"/>
</dbReference>
<dbReference type="GO" id="GO:0005337">
    <property type="term" value="F:nucleoside transmembrane transporter activity"/>
    <property type="evidence" value="ECO:0007669"/>
    <property type="project" value="InterPro"/>
</dbReference>
<dbReference type="InterPro" id="IPR002259">
    <property type="entry name" value="Eqnu_transpt"/>
</dbReference>
<dbReference type="InterPro" id="IPR036259">
    <property type="entry name" value="MFS_trans_sf"/>
</dbReference>
<dbReference type="PANTHER" id="PTHR10332">
    <property type="entry name" value="EQUILIBRATIVE NUCLEOSIDE TRANSPORTER"/>
    <property type="match status" value="1"/>
</dbReference>
<dbReference type="PANTHER" id="PTHR10332:SF82">
    <property type="entry name" value="TRANSPORTER 2, PUTATIVE-RELATED"/>
    <property type="match status" value="1"/>
</dbReference>
<dbReference type="Pfam" id="PF01733">
    <property type="entry name" value="Nucleoside_tran"/>
    <property type="match status" value="1"/>
</dbReference>
<dbReference type="SUPFAM" id="SSF103473">
    <property type="entry name" value="MFS general substrate transporter"/>
    <property type="match status" value="1"/>
</dbReference>
<organism evidence="14">
    <name type="scientific">Leishmania donovani</name>
    <dbReference type="NCBI Taxonomy" id="5661"/>
    <lineage>
        <taxon>Eukaryota</taxon>
        <taxon>Discoba</taxon>
        <taxon>Euglenozoa</taxon>
        <taxon>Kinetoplastea</taxon>
        <taxon>Metakinetoplastina</taxon>
        <taxon>Trypanosomatida</taxon>
        <taxon>Trypanosomatidae</taxon>
        <taxon>Leishmaniinae</taxon>
        <taxon>Leishmania</taxon>
    </lineage>
</organism>
<reference evidence="14" key="1">
    <citation type="journal article" date="2000" name="J. Biol. Chem.">
        <title>Cloning of a novel inosine-guanosine transporter gene from Leishmania donovani by functional rescue of a transport-deficient mutant.</title>
        <authorList>
            <person name="Carter N.S."/>
            <person name="Drew M.E."/>
            <person name="Sanchez M."/>
            <person name="Vasudevan G."/>
            <person name="Landfear S.M."/>
            <person name="Ullman B."/>
        </authorList>
    </citation>
    <scope>NUCLEOTIDE SEQUENCE [GENOMIC DNA]</scope>
    <scope>FUNCTION</scope>
    <scope>TRANSPORTER ACTIVITY</scope>
    <scope>BIOPHYSICOCHEMICAL PROPERTIES</scope>
</reference>
<reference evidence="12" key="2">
    <citation type="journal article" date="2003" name="J. Biol. Chem.">
        <title>Functional analysis of an inosine-guanosine transporter from Leishmania donovani. The role of conserved residues, aspartate 389 and arginine 393.</title>
        <authorList>
            <person name="Arastu-Kapur S."/>
            <person name="Ford E."/>
            <person name="Ullman B."/>
            <person name="Carter N.S."/>
        </authorList>
    </citation>
    <scope>FUNCTION</scope>
    <scope>TRANSPORTER ACTIVITY</scope>
    <scope>BIOPHYSICOCHEMICAL PROPERTIES</scope>
    <scope>SUBCELLULAR LOCATION</scope>
    <scope>DISRUPTION PHENOTYPE</scope>
    <scope>TOPOLOGY</scope>
    <scope>MUTAGENESIS OF ASP-389 AND ARG-393</scope>
</reference>
<reference evidence="12" key="3">
    <citation type="journal article" date="2003" name="J. Biol. Chem.">
        <title>Equilibrative nucleoside transporter family members from Leishmania donovani are electrogenic proton symporters.</title>
        <authorList>
            <person name="Stein A."/>
            <person name="Vaseduvan G."/>
            <person name="Carter N.S."/>
            <person name="Ullman B."/>
            <person name="Landfear S.M."/>
            <person name="Kavanaugh M.P."/>
        </authorList>
    </citation>
    <scope>FUNCTION</scope>
    <scope>TRANSPORTER ACTIVITY</scope>
</reference>
<reference evidence="12" key="4">
    <citation type="journal article" date="2005" name="J. Biol. Chem.">
        <title>Second-site suppression of a nonfunctional mutation within the Leishmania donovani inosine-guanosine transporter.</title>
        <authorList>
            <person name="Arastu-Kapur S."/>
            <person name="Arendt C.S."/>
            <person name="Purnat T."/>
            <person name="Carter N.S."/>
            <person name="Ullman B."/>
        </authorList>
    </citation>
    <scope>TRANSPORTER ACTIVITY</scope>
    <scope>SUBCELLULAR LOCATION</scope>
    <scope>MUTAGENESIS OF ASN-175 AND ASP-389</scope>
</reference>
<reference evidence="12" key="5">
    <citation type="journal article" date="2006" name="Int. J. Biochem. Cell Biol.">
        <title>Point mutations within the LdNT2 nucleoside transporter gene from Leishmania donovani confer drug resistance and transport deficiency.</title>
        <authorList>
            <person name="Galazka J."/>
            <person name="Carter N.S."/>
            <person name="Bekhouche S."/>
            <person name="Arastu-Kapur S."/>
            <person name="Ullman B."/>
        </authorList>
    </citation>
    <scope>FUNCTION</scope>
    <scope>TRANSPORTER ACTIVITY</scope>
    <scope>BIOPHYSICOCHEMICAL PROPERTIES</scope>
    <scope>SUBCELLULAR LOCATION</scope>
    <scope>MUTAGENESIS OF SER-189 AND 376-TRP--TYR-499</scope>
</reference>
<reference evidence="12" key="6">
    <citation type="journal article" date="2006" name="Mol. Biochem. Parasitol.">
        <title>Functional characterization of nucleoside transporter gene replacements in Leishmania donovani.</title>
        <authorList>
            <person name="Liu W."/>
            <person name="Boitz J.M."/>
            <person name="Galazka J."/>
            <person name="Arendt C.S."/>
            <person name="Carter N.S."/>
            <person name="Ullman B."/>
        </authorList>
    </citation>
    <scope>FUNCTION</scope>
    <scope>TRANSPORTER ACTIVITY</scope>
    <scope>BIOPHYSICOCHEMICAL PROPERTIES</scope>
    <scope>DISRUPTION PHENOTYPE</scope>
</reference>
<protein>
    <recommendedName>
        <fullName evidence="10">Nucleoside transporter 2</fullName>
        <shortName evidence="10">LdNT2</shortName>
    </recommendedName>
    <alternativeName>
        <fullName evidence="11">Equilibrative nucleoside transporter 2</fullName>
    </alternativeName>
    <alternativeName>
        <fullName evidence="14">Inosine-guanosine nucleoside transporter</fullName>
    </alternativeName>
</protein>
<comment type="function">
    <text evidence="4 5 6 8 9">High affinity nucleoside:H(+) symporter; transports inosine and guanosine (PubMed:10783393, PubMed:12807872, PubMed:12835315, PubMed:16464630). Can transport xanthosine (PubMed:17050001).</text>
</comment>
<comment type="catalytic activity">
    <reaction evidence="4 5 6 7 8">
        <text>inosine(in) + H(+)(in) = inosine(out) + H(+)(out)</text>
        <dbReference type="Rhea" id="RHEA:29963"/>
        <dbReference type="ChEBI" id="CHEBI:15378"/>
        <dbReference type="ChEBI" id="CHEBI:17596"/>
    </reaction>
</comment>
<comment type="catalytic activity">
    <reaction evidence="4 5 6 7 8">
        <text>guanosine(in) + H(+)(in) = guanosine(out) + H(+)(out)</text>
        <dbReference type="Rhea" id="RHEA:70915"/>
        <dbReference type="ChEBI" id="CHEBI:15378"/>
        <dbReference type="ChEBI" id="CHEBI:16750"/>
    </reaction>
</comment>
<comment type="catalytic activity">
    <reaction evidence="13">
        <text>xanthosine(in) + H(+)(in) = xanthosine(out) + H(+)(out)</text>
        <dbReference type="Rhea" id="RHEA:28939"/>
        <dbReference type="ChEBI" id="CHEBI:15378"/>
        <dbReference type="ChEBI" id="CHEBI:18107"/>
    </reaction>
</comment>
<comment type="biophysicochemical properties">
    <kinetics>
        <KM evidence="4">0.3 uM for inosine</KM>
        <KM evidence="4">1.7 uM for guanosine</KM>
        <KM evidence="9">43 uM for xanthosine</KM>
        <KM evidence="5 8">0.4 uM for inosine</KM>
        <KM evidence="8">0.8 uM for guanosine</KM>
    </kinetics>
</comment>
<comment type="subcellular location">
    <subcellularLocation>
        <location evidence="5 7 8">Cell membrane</location>
        <topology evidence="1">Multi-pass membrane protein</topology>
    </subcellularLocation>
    <subcellularLocation>
        <location evidence="5 7 8">Cell projection</location>
        <location evidence="5 7 8">Cilium</location>
        <location evidence="5 7 8">Flagellum</location>
    </subcellularLocation>
</comment>
<comment type="disruption phenotype">
    <text evidence="5 9">Gene knockout results in a reduced ability of parasites to transport inosine (PubMed:17050001). Increased adenosine transport (PubMed:17050001). Increased resistance to formycin B, a toxic inosine analog (PubMed:12807872, PubMed:17050001). No proliferation of promastigotes in medium with xanthosine as the sole purine nutrient (PubMed:17050001). Abolished xanthosine transport (PubMed:17050001). No significant effects on the transformation of promastigotes to axenic and intracellular amastigotes (PubMed:17050001). No significant effects on the ability of parasites to infect and maintain an infection in mouse cells (PubMed:17050001).</text>
</comment>
<comment type="miscellaneous">
    <text evidence="8 9">Can transport formycin B, a toxic inosine analog, but not tubercidin, a toxic adenosine analog.</text>
</comment>
<comment type="similarity">
    <text evidence="12">Belongs to the SLC29A/ENT transporter (TC 2.A.57) family.</text>
</comment>
<evidence type="ECO:0000255" key="1"/>
<evidence type="ECO:0000255" key="2">
    <source>
        <dbReference type="PROSITE-ProRule" id="PRU00498"/>
    </source>
</evidence>
<evidence type="ECO:0000256" key="3">
    <source>
        <dbReference type="SAM" id="MobiDB-lite"/>
    </source>
</evidence>
<evidence type="ECO:0000269" key="4">
    <source>
    </source>
</evidence>
<evidence type="ECO:0000269" key="5">
    <source>
    </source>
</evidence>
<evidence type="ECO:0000269" key="6">
    <source>
    </source>
</evidence>
<evidence type="ECO:0000269" key="7">
    <source>
    </source>
</evidence>
<evidence type="ECO:0000269" key="8">
    <source>
    </source>
</evidence>
<evidence type="ECO:0000269" key="9">
    <source>
    </source>
</evidence>
<evidence type="ECO:0000303" key="10">
    <source>
    </source>
</evidence>
<evidence type="ECO:0000303" key="11">
    <source>
    </source>
</evidence>
<evidence type="ECO:0000305" key="12"/>
<evidence type="ECO:0000305" key="13">
    <source>
    </source>
</evidence>
<evidence type="ECO:0000312" key="14">
    <source>
        <dbReference type="EMBL" id="AAF74264.1"/>
    </source>
</evidence>